<dbReference type="EMBL" id="AE000657">
    <property type="protein sequence ID" value="AAC07646.1"/>
    <property type="molecule type" value="Genomic_DNA"/>
</dbReference>
<dbReference type="PIR" id="A70457">
    <property type="entry name" value="A70457"/>
</dbReference>
<dbReference type="RefSeq" id="NP_214249.1">
    <property type="nucleotide sequence ID" value="NC_000918.1"/>
</dbReference>
<dbReference type="RefSeq" id="WP_010881186.1">
    <property type="nucleotide sequence ID" value="NC_000918.1"/>
</dbReference>
<dbReference type="SMR" id="O67683"/>
<dbReference type="STRING" id="224324.aq_1822"/>
<dbReference type="EnsemblBacteria" id="AAC07646">
    <property type="protein sequence ID" value="AAC07646"/>
    <property type="gene ID" value="aq_1822"/>
</dbReference>
<dbReference type="KEGG" id="aae:aq_1822"/>
<dbReference type="eggNOG" id="COG2018">
    <property type="taxonomic scope" value="Bacteria"/>
</dbReference>
<dbReference type="HOGENOM" id="CLU_1618226_0_0_0"/>
<dbReference type="InParanoid" id="O67683"/>
<dbReference type="OrthoDB" id="13762at2"/>
<dbReference type="Proteomes" id="UP000000798">
    <property type="component" value="Chromosome"/>
</dbReference>
<dbReference type="GO" id="GO:0005085">
    <property type="term" value="F:guanyl-nucleotide exchange factor activity"/>
    <property type="evidence" value="ECO:0007669"/>
    <property type="project" value="InterPro"/>
</dbReference>
<dbReference type="GO" id="GO:0060090">
    <property type="term" value="F:molecular adaptor activity"/>
    <property type="evidence" value="ECO:0007669"/>
    <property type="project" value="InterPro"/>
</dbReference>
<dbReference type="GO" id="GO:0071230">
    <property type="term" value="P:cellular response to amino acid stimulus"/>
    <property type="evidence" value="ECO:0000318"/>
    <property type="project" value="GO_Central"/>
</dbReference>
<dbReference type="GO" id="GO:0032008">
    <property type="term" value="P:positive regulation of TOR signaling"/>
    <property type="evidence" value="ECO:0000318"/>
    <property type="project" value="GO_Central"/>
</dbReference>
<dbReference type="Gene3D" id="3.30.450.30">
    <property type="entry name" value="Dynein light chain 2a, cytoplasmic"/>
    <property type="match status" value="1"/>
</dbReference>
<dbReference type="InterPro" id="IPR037587">
    <property type="entry name" value="LAMTOR2-like"/>
</dbReference>
<dbReference type="InterPro" id="IPR004942">
    <property type="entry name" value="Roadblock/LAMTOR2_dom"/>
</dbReference>
<dbReference type="PANTHER" id="PTHR13323">
    <property type="entry name" value="LATE ENDOSOMAL/LYSOSOMAL MP1 INTERACTING PROTEIN"/>
    <property type="match status" value="1"/>
</dbReference>
<dbReference type="Pfam" id="PF03259">
    <property type="entry name" value="Robl_LC7"/>
    <property type="match status" value="1"/>
</dbReference>
<dbReference type="SMART" id="SM00960">
    <property type="entry name" value="Robl_LC7"/>
    <property type="match status" value="1"/>
</dbReference>
<dbReference type="SUPFAM" id="SSF103196">
    <property type="entry name" value="Roadblock/LC7 domain"/>
    <property type="match status" value="1"/>
</dbReference>
<organism>
    <name type="scientific">Aquifex aeolicus (strain VF5)</name>
    <dbReference type="NCBI Taxonomy" id="224324"/>
    <lineage>
        <taxon>Bacteria</taxon>
        <taxon>Pseudomonadati</taxon>
        <taxon>Aquificota</taxon>
        <taxon>Aquificia</taxon>
        <taxon>Aquificales</taxon>
        <taxon>Aquificaceae</taxon>
        <taxon>Aquifex</taxon>
    </lineage>
</organism>
<sequence length="162" mass="18599">MELDLISYELDEKTKEGIEKVVEKFFTKAEPDLVLIFDKAGRILACKGMDISDTYSEFISSILSALFFASEELTSMLDKNDEMKDVFYETKNRVFLMARLEKDFLIGVISRKNLSLGSIRLFFNHLVSDLNAVLKNLKEVEKKSLKISKEELKKKLDQILGS</sequence>
<gene>
    <name type="ordered locus">aq_1822</name>
</gene>
<evidence type="ECO:0000255" key="1"/>
<proteinExistence type="predicted"/>
<accession>O67683</accession>
<reference key="1">
    <citation type="journal article" date="1998" name="Nature">
        <title>The complete genome of the hyperthermophilic bacterium Aquifex aeolicus.</title>
        <authorList>
            <person name="Deckert G."/>
            <person name="Warren P.V."/>
            <person name="Gaasterland T."/>
            <person name="Young W.G."/>
            <person name="Lenox A.L."/>
            <person name="Graham D.E."/>
            <person name="Overbeek R."/>
            <person name="Snead M.A."/>
            <person name="Keller M."/>
            <person name="Aujay M."/>
            <person name="Huber R."/>
            <person name="Feldman R.A."/>
            <person name="Short J.M."/>
            <person name="Olsen G.J."/>
            <person name="Swanson R.V."/>
        </authorList>
    </citation>
    <scope>NUCLEOTIDE SEQUENCE [LARGE SCALE GENOMIC DNA]</scope>
    <source>
        <strain>VF5</strain>
    </source>
</reference>
<protein>
    <recommendedName>
        <fullName>Uncharacterized protein aq_1822</fullName>
    </recommendedName>
</protein>
<keyword id="KW-0175">Coiled coil</keyword>
<keyword id="KW-1185">Reference proteome</keyword>
<feature type="chain" id="PRO_0000186947" description="Uncharacterized protein aq_1822">
    <location>
        <begin position="1"/>
        <end position="162"/>
    </location>
</feature>
<feature type="coiled-coil region" evidence="1">
    <location>
        <begin position="129"/>
        <end position="161"/>
    </location>
</feature>
<name>Y1822_AQUAE</name>